<keyword id="KW-0067">ATP-binding</keyword>
<keyword id="KW-0963">Cytoplasm</keyword>
<keyword id="KW-0418">Kinase</keyword>
<keyword id="KW-0547">Nucleotide-binding</keyword>
<keyword id="KW-0665">Pyrimidine biosynthesis</keyword>
<keyword id="KW-1185">Reference proteome</keyword>
<keyword id="KW-0808">Transferase</keyword>
<sequence>MSTDKKFIYRRILLKISGEVLQGVNKFGIDINSLKRIAKEIEFIVKIGVQVGLVIGSGNLFRGAKLSKLGLNRVASDHIGILSTVINSLAMRDTINSISSIKTCLMSAIPLNGICEIYNYEKAMNLLSNHVVVIFSAGTGNPFFTTDSAACLRGIETESDIILKGTKVDGVYSKDPNKDSHAFLYRRLTYKDVLKKELKIMDLAAFTLARDYHMPIRVFNIHTPGSLYRIIMGDDEGTLITR</sequence>
<proteinExistence type="inferred from homology"/>
<name>PYRH_BUCAI</name>
<reference key="1">
    <citation type="journal article" date="2000" name="Nature">
        <title>Genome sequence of the endocellular bacterial symbiont of aphids Buchnera sp. APS.</title>
        <authorList>
            <person name="Shigenobu S."/>
            <person name="Watanabe H."/>
            <person name="Hattori M."/>
            <person name="Sakaki Y."/>
            <person name="Ishikawa H."/>
        </authorList>
    </citation>
    <scope>NUCLEOTIDE SEQUENCE [LARGE SCALE GENOMIC DNA]</scope>
    <source>
        <strain>APS</strain>
    </source>
</reference>
<gene>
    <name evidence="1" type="primary">pyrH</name>
    <name type="ordered locus">BU233</name>
</gene>
<organism>
    <name type="scientific">Buchnera aphidicola subsp. Acyrthosiphon pisum (strain APS)</name>
    <name type="common">Acyrthosiphon pisum symbiotic bacterium</name>
    <dbReference type="NCBI Taxonomy" id="107806"/>
    <lineage>
        <taxon>Bacteria</taxon>
        <taxon>Pseudomonadati</taxon>
        <taxon>Pseudomonadota</taxon>
        <taxon>Gammaproteobacteria</taxon>
        <taxon>Enterobacterales</taxon>
        <taxon>Erwiniaceae</taxon>
        <taxon>Buchnera</taxon>
    </lineage>
</organism>
<accession>P57327</accession>
<feature type="chain" id="PRO_0000143829" description="Uridylate kinase">
    <location>
        <begin position="1"/>
        <end position="242"/>
    </location>
</feature>
<feature type="binding site" evidence="1">
    <location>
        <begin position="15"/>
        <end position="18"/>
    </location>
    <ligand>
        <name>ATP</name>
        <dbReference type="ChEBI" id="CHEBI:30616"/>
    </ligand>
</feature>
<feature type="binding site" evidence="1">
    <location>
        <position position="58"/>
    </location>
    <ligand>
        <name>ATP</name>
        <dbReference type="ChEBI" id="CHEBI:30616"/>
    </ligand>
</feature>
<feature type="binding site" evidence="1">
    <location>
        <position position="62"/>
    </location>
    <ligand>
        <name>ATP</name>
        <dbReference type="ChEBI" id="CHEBI:30616"/>
    </ligand>
</feature>
<feature type="binding site" evidence="1">
    <location>
        <position position="77"/>
    </location>
    <ligand>
        <name>UMP</name>
        <dbReference type="ChEBI" id="CHEBI:57865"/>
    </ligand>
</feature>
<feature type="binding site" evidence="1">
    <location>
        <begin position="139"/>
        <end position="146"/>
    </location>
    <ligand>
        <name>UMP</name>
        <dbReference type="ChEBI" id="CHEBI:57865"/>
    </ligand>
</feature>
<feature type="binding site" evidence="1">
    <location>
        <position position="166"/>
    </location>
    <ligand>
        <name>ATP</name>
        <dbReference type="ChEBI" id="CHEBI:30616"/>
    </ligand>
</feature>
<feature type="binding site" evidence="1">
    <location>
        <position position="172"/>
    </location>
    <ligand>
        <name>ATP</name>
        <dbReference type="ChEBI" id="CHEBI:30616"/>
    </ligand>
</feature>
<feature type="binding site" evidence="1">
    <location>
        <position position="175"/>
    </location>
    <ligand>
        <name>ATP</name>
        <dbReference type="ChEBI" id="CHEBI:30616"/>
    </ligand>
</feature>
<protein>
    <recommendedName>
        <fullName evidence="1">Uridylate kinase</fullName>
        <shortName evidence="1">UK</shortName>
        <ecNumber evidence="1">2.7.4.22</ecNumber>
    </recommendedName>
    <alternativeName>
        <fullName evidence="1">Uridine monophosphate kinase</fullName>
        <shortName evidence="1">UMP kinase</shortName>
        <shortName evidence="1">UMPK</shortName>
    </alternativeName>
</protein>
<evidence type="ECO:0000255" key="1">
    <source>
        <dbReference type="HAMAP-Rule" id="MF_01220"/>
    </source>
</evidence>
<dbReference type="EC" id="2.7.4.22" evidence="1"/>
<dbReference type="EMBL" id="BA000003">
    <property type="protein sequence ID" value="BAB12948.1"/>
    <property type="molecule type" value="Genomic_DNA"/>
</dbReference>
<dbReference type="RefSeq" id="NP_240062.1">
    <property type="nucleotide sequence ID" value="NC_002528.1"/>
</dbReference>
<dbReference type="RefSeq" id="WP_009874189.1">
    <property type="nucleotide sequence ID" value="NZ_AP036055.1"/>
</dbReference>
<dbReference type="SMR" id="P57327"/>
<dbReference type="STRING" id="563178.BUAP5A_228"/>
<dbReference type="EnsemblBacteria" id="BAB12948">
    <property type="protein sequence ID" value="BAB12948"/>
    <property type="gene ID" value="BAB12948"/>
</dbReference>
<dbReference type="KEGG" id="buc:BU233"/>
<dbReference type="PATRIC" id="fig|107806.10.peg.246"/>
<dbReference type="eggNOG" id="COG0528">
    <property type="taxonomic scope" value="Bacteria"/>
</dbReference>
<dbReference type="HOGENOM" id="CLU_033861_0_0_6"/>
<dbReference type="UniPathway" id="UPA00159">
    <property type="reaction ID" value="UER00275"/>
</dbReference>
<dbReference type="Proteomes" id="UP000001806">
    <property type="component" value="Chromosome"/>
</dbReference>
<dbReference type="GO" id="GO:0005829">
    <property type="term" value="C:cytosol"/>
    <property type="evidence" value="ECO:0007669"/>
    <property type="project" value="TreeGrafter"/>
</dbReference>
<dbReference type="GO" id="GO:0005524">
    <property type="term" value="F:ATP binding"/>
    <property type="evidence" value="ECO:0007669"/>
    <property type="project" value="UniProtKB-KW"/>
</dbReference>
<dbReference type="GO" id="GO:0033862">
    <property type="term" value="F:UMP kinase activity"/>
    <property type="evidence" value="ECO:0007669"/>
    <property type="project" value="UniProtKB-EC"/>
</dbReference>
<dbReference type="GO" id="GO:0044210">
    <property type="term" value="P:'de novo' CTP biosynthetic process"/>
    <property type="evidence" value="ECO:0007669"/>
    <property type="project" value="UniProtKB-UniRule"/>
</dbReference>
<dbReference type="GO" id="GO:0006225">
    <property type="term" value="P:UDP biosynthetic process"/>
    <property type="evidence" value="ECO:0007669"/>
    <property type="project" value="TreeGrafter"/>
</dbReference>
<dbReference type="CDD" id="cd04254">
    <property type="entry name" value="AAK_UMPK-PyrH-Ec"/>
    <property type="match status" value="1"/>
</dbReference>
<dbReference type="FunFam" id="3.40.1160.10:FF:000001">
    <property type="entry name" value="Uridylate kinase"/>
    <property type="match status" value="1"/>
</dbReference>
<dbReference type="Gene3D" id="3.40.1160.10">
    <property type="entry name" value="Acetylglutamate kinase-like"/>
    <property type="match status" value="1"/>
</dbReference>
<dbReference type="HAMAP" id="MF_01220_B">
    <property type="entry name" value="PyrH_B"/>
    <property type="match status" value="1"/>
</dbReference>
<dbReference type="InterPro" id="IPR036393">
    <property type="entry name" value="AceGlu_kinase-like_sf"/>
</dbReference>
<dbReference type="InterPro" id="IPR001048">
    <property type="entry name" value="Asp/Glu/Uridylate_kinase"/>
</dbReference>
<dbReference type="InterPro" id="IPR011817">
    <property type="entry name" value="Uridylate_kinase"/>
</dbReference>
<dbReference type="InterPro" id="IPR015963">
    <property type="entry name" value="Uridylate_kinase_bac"/>
</dbReference>
<dbReference type="NCBIfam" id="TIGR02075">
    <property type="entry name" value="pyrH_bact"/>
    <property type="match status" value="1"/>
</dbReference>
<dbReference type="PANTHER" id="PTHR42833">
    <property type="entry name" value="URIDYLATE KINASE"/>
    <property type="match status" value="1"/>
</dbReference>
<dbReference type="PANTHER" id="PTHR42833:SF4">
    <property type="entry name" value="URIDYLATE KINASE PUMPKIN, CHLOROPLASTIC"/>
    <property type="match status" value="1"/>
</dbReference>
<dbReference type="Pfam" id="PF00696">
    <property type="entry name" value="AA_kinase"/>
    <property type="match status" value="1"/>
</dbReference>
<dbReference type="PIRSF" id="PIRSF005650">
    <property type="entry name" value="Uridylate_kin"/>
    <property type="match status" value="1"/>
</dbReference>
<dbReference type="SUPFAM" id="SSF53633">
    <property type="entry name" value="Carbamate kinase-like"/>
    <property type="match status" value="1"/>
</dbReference>
<comment type="function">
    <text evidence="1">Catalyzes the reversible phosphorylation of UMP to UDP.</text>
</comment>
<comment type="catalytic activity">
    <reaction evidence="1">
        <text>UMP + ATP = UDP + ADP</text>
        <dbReference type="Rhea" id="RHEA:24400"/>
        <dbReference type="ChEBI" id="CHEBI:30616"/>
        <dbReference type="ChEBI" id="CHEBI:57865"/>
        <dbReference type="ChEBI" id="CHEBI:58223"/>
        <dbReference type="ChEBI" id="CHEBI:456216"/>
        <dbReference type="EC" id="2.7.4.22"/>
    </reaction>
</comment>
<comment type="activity regulation">
    <text evidence="1">Inhibited by UTP.</text>
</comment>
<comment type="pathway">
    <text evidence="1">Pyrimidine metabolism; CTP biosynthesis via de novo pathway; UDP from UMP (UMPK route): step 1/1.</text>
</comment>
<comment type="subunit">
    <text evidence="1">Homohexamer.</text>
</comment>
<comment type="subcellular location">
    <subcellularLocation>
        <location evidence="1">Cytoplasm</location>
    </subcellularLocation>
</comment>
<comment type="similarity">
    <text evidence="1">Belongs to the UMP kinase family.</text>
</comment>